<protein>
    <recommendedName>
        <fullName>Non-specific lipid-transfer protein 9</fullName>
        <shortName>LTP 9</shortName>
    </recommendedName>
</protein>
<evidence type="ECO:0000250" key="1"/>
<evidence type="ECO:0000255" key="2"/>
<evidence type="ECO:0000305" key="3"/>
<keyword id="KW-1015">Disulfide bond</keyword>
<keyword id="KW-0446">Lipid-binding</keyword>
<keyword id="KW-1185">Reference proteome</keyword>
<keyword id="KW-0732">Signal</keyword>
<keyword id="KW-0813">Transport</keyword>
<dbReference type="EMBL" id="AC006920">
    <property type="protein sequence ID" value="AAM15319.1"/>
    <property type="status" value="ALT_SEQ"/>
    <property type="molecule type" value="Genomic_DNA"/>
</dbReference>
<dbReference type="EMBL" id="AC007267">
    <property type="protein sequence ID" value="AAM15478.1"/>
    <property type="status" value="ALT_SEQ"/>
    <property type="molecule type" value="Genomic_DNA"/>
</dbReference>
<dbReference type="EMBL" id="CP002685">
    <property type="protein sequence ID" value="AEC06388.1"/>
    <property type="molecule type" value="Genomic_DNA"/>
</dbReference>
<dbReference type="EMBL" id="BT015138">
    <property type="protein sequence ID" value="AAT85734.1"/>
    <property type="molecule type" value="mRNA"/>
</dbReference>
<dbReference type="RefSeq" id="NP_179135.2">
    <property type="nucleotide sequence ID" value="NM_127093.2"/>
</dbReference>
<dbReference type="SMR" id="Q6AWW0"/>
<dbReference type="STRING" id="3702.Q6AWW0"/>
<dbReference type="PaxDb" id="3702-AT2G15325.1"/>
<dbReference type="ProteomicsDB" id="251156"/>
<dbReference type="EnsemblPlants" id="AT2G15325.1">
    <property type="protein sequence ID" value="AT2G15325.1"/>
    <property type="gene ID" value="AT2G15325"/>
</dbReference>
<dbReference type="GeneID" id="816022"/>
<dbReference type="Gramene" id="AT2G15325.1">
    <property type="protein sequence ID" value="AT2G15325.1"/>
    <property type="gene ID" value="AT2G15325"/>
</dbReference>
<dbReference type="KEGG" id="ath:AT2G15325"/>
<dbReference type="Araport" id="AT2G15325"/>
<dbReference type="TAIR" id="AT2G15325"/>
<dbReference type="HOGENOM" id="CLU_128423_2_1_1"/>
<dbReference type="InParanoid" id="Q6AWW0"/>
<dbReference type="OMA" id="CRIPLAV"/>
<dbReference type="PhylomeDB" id="Q6AWW0"/>
<dbReference type="PRO" id="PR:Q6AWW0"/>
<dbReference type="Proteomes" id="UP000006548">
    <property type="component" value="Chromosome 2"/>
</dbReference>
<dbReference type="ExpressionAtlas" id="Q6AWW0">
    <property type="expression patterns" value="baseline and differential"/>
</dbReference>
<dbReference type="GO" id="GO:0008289">
    <property type="term" value="F:lipid binding"/>
    <property type="evidence" value="ECO:0007669"/>
    <property type="project" value="UniProtKB-KW"/>
</dbReference>
<dbReference type="GO" id="GO:0006869">
    <property type="term" value="P:lipid transport"/>
    <property type="evidence" value="ECO:0007669"/>
    <property type="project" value="InterPro"/>
</dbReference>
<dbReference type="CDD" id="cd01960">
    <property type="entry name" value="nsLTP1"/>
    <property type="match status" value="1"/>
</dbReference>
<dbReference type="Gene3D" id="1.10.110.10">
    <property type="entry name" value="Plant lipid-transfer and hydrophobic proteins"/>
    <property type="match status" value="1"/>
</dbReference>
<dbReference type="InterPro" id="IPR036312">
    <property type="entry name" value="Bifun_inhib/LTP/seed_sf"/>
</dbReference>
<dbReference type="InterPro" id="IPR016140">
    <property type="entry name" value="Bifunc_inhib/LTP/seed_store"/>
</dbReference>
<dbReference type="InterPro" id="IPR000528">
    <property type="entry name" value="Plant_nsLTP"/>
</dbReference>
<dbReference type="PANTHER" id="PTHR33076">
    <property type="entry name" value="NON-SPECIFIC LIPID-TRANSFER PROTEIN 2-RELATED"/>
    <property type="match status" value="1"/>
</dbReference>
<dbReference type="Pfam" id="PF00234">
    <property type="entry name" value="Tryp_alpha_amyl"/>
    <property type="match status" value="1"/>
</dbReference>
<dbReference type="PRINTS" id="PR00382">
    <property type="entry name" value="LIPIDTRNSFER"/>
</dbReference>
<dbReference type="SMART" id="SM00499">
    <property type="entry name" value="AAI"/>
    <property type="match status" value="1"/>
</dbReference>
<dbReference type="SUPFAM" id="SSF47699">
    <property type="entry name" value="Bifunctional inhibitor/lipid-transfer protein/seed storage 2S albumin"/>
    <property type="match status" value="1"/>
</dbReference>
<organism>
    <name type="scientific">Arabidopsis thaliana</name>
    <name type="common">Mouse-ear cress</name>
    <dbReference type="NCBI Taxonomy" id="3702"/>
    <lineage>
        <taxon>Eukaryota</taxon>
        <taxon>Viridiplantae</taxon>
        <taxon>Streptophyta</taxon>
        <taxon>Embryophyta</taxon>
        <taxon>Tracheophyta</taxon>
        <taxon>Spermatophyta</taxon>
        <taxon>Magnoliopsida</taxon>
        <taxon>eudicotyledons</taxon>
        <taxon>Gunneridae</taxon>
        <taxon>Pentapetalae</taxon>
        <taxon>rosids</taxon>
        <taxon>malvids</taxon>
        <taxon>Brassicales</taxon>
        <taxon>Brassicaceae</taxon>
        <taxon>Camelineae</taxon>
        <taxon>Arabidopsis</taxon>
    </lineage>
</organism>
<comment type="function">
    <text evidence="1">Plant non-specific lipid-transfer proteins transfer phospholipids as well as galactolipids across membranes. May play a role in wax or cutin deposition in the cell walls of expanding epidermal cells and certain secretory tissues (By similarity).</text>
</comment>
<comment type="similarity">
    <text evidence="3">Belongs to the plant LTP family.</text>
</comment>
<comment type="sequence caution" evidence="3">
    <conflict type="erroneous gene model prediction">
        <sequence resource="EMBL-CDS" id="AAM15319"/>
    </conflict>
</comment>
<comment type="sequence caution" evidence="3">
    <conflict type="erroneous gene model prediction">
        <sequence resource="EMBL-CDS" id="AAM15478"/>
    </conflict>
</comment>
<proteinExistence type="evidence at transcript level"/>
<accession>Q6AWW0</accession>
<accession>Q8RUP1</accession>
<name>NLTP9_ARATH</name>
<feature type="signal peptide" evidence="2">
    <location>
        <begin position="1"/>
        <end position="27"/>
    </location>
</feature>
<feature type="chain" id="PRO_0000355622" description="Non-specific lipid-transfer protein 9">
    <location>
        <begin position="28"/>
        <end position="121"/>
    </location>
</feature>
<feature type="disulfide bond" evidence="2">
    <location>
        <begin position="31"/>
        <end position="80"/>
    </location>
</feature>
<feature type="disulfide bond" evidence="2">
    <location>
        <begin position="41"/>
        <end position="57"/>
    </location>
</feature>
<feature type="disulfide bond" evidence="2">
    <location>
        <begin position="58"/>
        <end position="102"/>
    </location>
</feature>
<feature type="disulfide bond" evidence="2">
    <location>
        <begin position="78"/>
        <end position="116"/>
    </location>
</feature>
<gene>
    <name type="primary">LTP9</name>
    <name type="ordered locus">At2g15325</name>
    <name type="ORF">F27O10.2</name>
</gene>
<sequence>MRKSISIAFVIAITIFMSHLNVFTVYSLTPCEEATNLLTPCLRYLWAPPEAKPSPECCSGLDKVNKGVKTYDDRHDMCICLSSEAAITSADQYKFDNLPKLCNVALFAPVGPKFDCSTIKV</sequence>
<reference key="1">
    <citation type="journal article" date="1999" name="Nature">
        <title>Sequence and analysis of chromosome 2 of the plant Arabidopsis thaliana.</title>
        <authorList>
            <person name="Lin X."/>
            <person name="Kaul S."/>
            <person name="Rounsley S.D."/>
            <person name="Shea T.P."/>
            <person name="Benito M.-I."/>
            <person name="Town C.D."/>
            <person name="Fujii C.Y."/>
            <person name="Mason T.M."/>
            <person name="Bowman C.L."/>
            <person name="Barnstead M.E."/>
            <person name="Feldblyum T.V."/>
            <person name="Buell C.R."/>
            <person name="Ketchum K.A."/>
            <person name="Lee J.J."/>
            <person name="Ronning C.M."/>
            <person name="Koo H.L."/>
            <person name="Moffat K.S."/>
            <person name="Cronin L.A."/>
            <person name="Shen M."/>
            <person name="Pai G."/>
            <person name="Van Aken S."/>
            <person name="Umayam L."/>
            <person name="Tallon L.J."/>
            <person name="Gill J.E."/>
            <person name="Adams M.D."/>
            <person name="Carrera A.J."/>
            <person name="Creasy T.H."/>
            <person name="Goodman H.M."/>
            <person name="Somerville C.R."/>
            <person name="Copenhaver G.P."/>
            <person name="Preuss D."/>
            <person name="Nierman W.C."/>
            <person name="White O."/>
            <person name="Eisen J.A."/>
            <person name="Salzberg S.L."/>
            <person name="Fraser C.M."/>
            <person name="Venter J.C."/>
        </authorList>
    </citation>
    <scope>NUCLEOTIDE SEQUENCE [LARGE SCALE GENOMIC DNA]</scope>
    <source>
        <strain>cv. Columbia</strain>
    </source>
</reference>
<reference key="2">
    <citation type="journal article" date="2017" name="Plant J.">
        <title>Araport11: a complete reannotation of the Arabidopsis thaliana reference genome.</title>
        <authorList>
            <person name="Cheng C.Y."/>
            <person name="Krishnakumar V."/>
            <person name="Chan A.P."/>
            <person name="Thibaud-Nissen F."/>
            <person name="Schobel S."/>
            <person name="Town C.D."/>
        </authorList>
    </citation>
    <scope>GENOME REANNOTATION</scope>
    <source>
        <strain>cv. Columbia</strain>
    </source>
</reference>
<reference key="3">
    <citation type="submission" date="2004-08" db="EMBL/GenBank/DDBJ databases">
        <title>Arabidopsis ORF clones.</title>
        <authorList>
            <person name="Cheuk R.F."/>
            <person name="Chen H."/>
            <person name="Kim C.J."/>
            <person name="Shinn P."/>
            <person name="Ecker J.R."/>
        </authorList>
    </citation>
    <scope>NUCLEOTIDE SEQUENCE [LARGE SCALE MRNA]</scope>
    <source>
        <strain>cv. Columbia</strain>
    </source>
</reference>
<reference key="4">
    <citation type="journal article" date="2008" name="Plant Physiol. Biochem.">
        <title>Plant pathogenesis-related (PR) proteins: a focus on PR peptides.</title>
        <authorList>
            <person name="Sels J."/>
            <person name="Mathys J."/>
            <person name="De Coninck B.M.A."/>
            <person name="Cammue B.P.A."/>
            <person name="De Bolle M.F.C."/>
        </authorList>
    </citation>
    <scope>GENE FAMILY</scope>
    <scope>NOMENCLATURE</scope>
</reference>